<feature type="chain" id="PRO_1000050262" description="4-hydroxy-tetrahydrodipicolinate synthase">
    <location>
        <begin position="1"/>
        <end position="294"/>
    </location>
</feature>
<feature type="active site" description="Proton donor/acceptor" evidence="1">
    <location>
        <position position="133"/>
    </location>
</feature>
<feature type="active site" description="Schiff-base intermediate with substrate" evidence="1">
    <location>
        <position position="161"/>
    </location>
</feature>
<feature type="binding site" evidence="1">
    <location>
        <position position="45"/>
    </location>
    <ligand>
        <name>pyruvate</name>
        <dbReference type="ChEBI" id="CHEBI:15361"/>
    </ligand>
</feature>
<feature type="binding site" evidence="1">
    <location>
        <position position="203"/>
    </location>
    <ligand>
        <name>pyruvate</name>
        <dbReference type="ChEBI" id="CHEBI:15361"/>
    </ligand>
</feature>
<feature type="site" description="Part of a proton relay during catalysis" evidence="1">
    <location>
        <position position="44"/>
    </location>
</feature>
<feature type="site" description="Part of a proton relay during catalysis" evidence="1">
    <location>
        <position position="107"/>
    </location>
</feature>
<evidence type="ECO:0000255" key="1">
    <source>
        <dbReference type="HAMAP-Rule" id="MF_00418"/>
    </source>
</evidence>
<evidence type="ECO:0000305" key="2"/>
<sequence length="294" mass="31001">MINGSIVALITPMNSDGSVDFASLERLVEFHIDQGTDAIVAVGTTGESATLPMSEHVTVVSQTVKFAAGRVPVIGGNGANATSEAVELTKSLSKVGVAAMLGVTPYYNKPTPKGLIAHYKAVAASTDIPQILYNVPGRTAVDMLPETVAELVSVSNIIGVKEATGDLSRVKRLRELCGDDFLLYSGDDATAREFLLLGGNGVISVANNIVPQAFKAMCDAALAGNAELALSIDTPLRGLYSTLFCEANPIPVKWAAHRMGLIECGHIRLPLTELSEQCHGLLIEAMTRAQIEVK</sequence>
<organism>
    <name type="scientific">Shewanella baltica (strain OS155 / ATCC BAA-1091)</name>
    <dbReference type="NCBI Taxonomy" id="325240"/>
    <lineage>
        <taxon>Bacteria</taxon>
        <taxon>Pseudomonadati</taxon>
        <taxon>Pseudomonadota</taxon>
        <taxon>Gammaproteobacteria</taxon>
        <taxon>Alteromonadales</taxon>
        <taxon>Shewanellaceae</taxon>
        <taxon>Shewanella</taxon>
    </lineage>
</organism>
<keyword id="KW-0028">Amino-acid biosynthesis</keyword>
<keyword id="KW-0963">Cytoplasm</keyword>
<keyword id="KW-0220">Diaminopimelate biosynthesis</keyword>
<keyword id="KW-0456">Lyase</keyword>
<keyword id="KW-0457">Lysine biosynthesis</keyword>
<keyword id="KW-1185">Reference proteome</keyword>
<keyword id="KW-0704">Schiff base</keyword>
<reference key="1">
    <citation type="submission" date="2007-02" db="EMBL/GenBank/DDBJ databases">
        <title>Complete sequence of chromosome of Shewanella baltica OS155.</title>
        <authorList>
            <consortium name="US DOE Joint Genome Institute"/>
            <person name="Copeland A."/>
            <person name="Lucas S."/>
            <person name="Lapidus A."/>
            <person name="Barry K."/>
            <person name="Detter J.C."/>
            <person name="Glavina del Rio T."/>
            <person name="Hammon N."/>
            <person name="Israni S."/>
            <person name="Dalin E."/>
            <person name="Tice H."/>
            <person name="Pitluck S."/>
            <person name="Sims D.R."/>
            <person name="Brettin T."/>
            <person name="Bruce D."/>
            <person name="Han C."/>
            <person name="Tapia R."/>
            <person name="Brainard J."/>
            <person name="Schmutz J."/>
            <person name="Larimer F."/>
            <person name="Land M."/>
            <person name="Hauser L."/>
            <person name="Kyrpides N."/>
            <person name="Mikhailova N."/>
            <person name="Brettar I."/>
            <person name="Klappenbach J."/>
            <person name="Konstantinidis K."/>
            <person name="Rodrigues J."/>
            <person name="Tiedje J."/>
            <person name="Richardson P."/>
        </authorList>
    </citation>
    <scope>NUCLEOTIDE SEQUENCE [LARGE SCALE GENOMIC DNA]</scope>
    <source>
        <strain>OS155 / ATCC BAA-1091</strain>
    </source>
</reference>
<name>DAPA_SHEB5</name>
<proteinExistence type="inferred from homology"/>
<dbReference type="EC" id="4.3.3.7" evidence="1"/>
<dbReference type="EMBL" id="CP000563">
    <property type="protein sequence ID" value="ABN62045.1"/>
    <property type="molecule type" value="Genomic_DNA"/>
</dbReference>
<dbReference type="RefSeq" id="WP_006082060.1">
    <property type="nucleotide sequence ID" value="NC_009052.1"/>
</dbReference>
<dbReference type="SMR" id="A3D5N2"/>
<dbReference type="STRING" id="325240.Sbal_2552"/>
<dbReference type="GeneID" id="11772756"/>
<dbReference type="KEGG" id="sbl:Sbal_2552"/>
<dbReference type="HOGENOM" id="CLU_049343_7_1_6"/>
<dbReference type="OrthoDB" id="9782828at2"/>
<dbReference type="UniPathway" id="UPA00034">
    <property type="reaction ID" value="UER00017"/>
</dbReference>
<dbReference type="Proteomes" id="UP000001557">
    <property type="component" value="Chromosome"/>
</dbReference>
<dbReference type="GO" id="GO:0005829">
    <property type="term" value="C:cytosol"/>
    <property type="evidence" value="ECO:0007669"/>
    <property type="project" value="TreeGrafter"/>
</dbReference>
<dbReference type="GO" id="GO:0008840">
    <property type="term" value="F:4-hydroxy-tetrahydrodipicolinate synthase activity"/>
    <property type="evidence" value="ECO:0007669"/>
    <property type="project" value="UniProtKB-UniRule"/>
</dbReference>
<dbReference type="GO" id="GO:0019877">
    <property type="term" value="P:diaminopimelate biosynthetic process"/>
    <property type="evidence" value="ECO:0007669"/>
    <property type="project" value="UniProtKB-UniRule"/>
</dbReference>
<dbReference type="GO" id="GO:0009089">
    <property type="term" value="P:lysine biosynthetic process via diaminopimelate"/>
    <property type="evidence" value="ECO:0007669"/>
    <property type="project" value="UniProtKB-UniRule"/>
</dbReference>
<dbReference type="CDD" id="cd00950">
    <property type="entry name" value="DHDPS"/>
    <property type="match status" value="1"/>
</dbReference>
<dbReference type="Gene3D" id="3.20.20.70">
    <property type="entry name" value="Aldolase class I"/>
    <property type="match status" value="1"/>
</dbReference>
<dbReference type="HAMAP" id="MF_00418">
    <property type="entry name" value="DapA"/>
    <property type="match status" value="1"/>
</dbReference>
<dbReference type="InterPro" id="IPR013785">
    <property type="entry name" value="Aldolase_TIM"/>
</dbReference>
<dbReference type="InterPro" id="IPR005263">
    <property type="entry name" value="DapA"/>
</dbReference>
<dbReference type="InterPro" id="IPR002220">
    <property type="entry name" value="DapA-like"/>
</dbReference>
<dbReference type="InterPro" id="IPR020625">
    <property type="entry name" value="Schiff_base-form_aldolases_AS"/>
</dbReference>
<dbReference type="InterPro" id="IPR020624">
    <property type="entry name" value="Schiff_base-form_aldolases_CS"/>
</dbReference>
<dbReference type="NCBIfam" id="TIGR00674">
    <property type="entry name" value="dapA"/>
    <property type="match status" value="1"/>
</dbReference>
<dbReference type="PANTHER" id="PTHR12128:SF66">
    <property type="entry name" value="4-HYDROXY-2-OXOGLUTARATE ALDOLASE, MITOCHONDRIAL"/>
    <property type="match status" value="1"/>
</dbReference>
<dbReference type="PANTHER" id="PTHR12128">
    <property type="entry name" value="DIHYDRODIPICOLINATE SYNTHASE"/>
    <property type="match status" value="1"/>
</dbReference>
<dbReference type="Pfam" id="PF00701">
    <property type="entry name" value="DHDPS"/>
    <property type="match status" value="1"/>
</dbReference>
<dbReference type="PIRSF" id="PIRSF001365">
    <property type="entry name" value="DHDPS"/>
    <property type="match status" value="1"/>
</dbReference>
<dbReference type="PRINTS" id="PR00146">
    <property type="entry name" value="DHPICSNTHASE"/>
</dbReference>
<dbReference type="SMART" id="SM01130">
    <property type="entry name" value="DHDPS"/>
    <property type="match status" value="1"/>
</dbReference>
<dbReference type="SUPFAM" id="SSF51569">
    <property type="entry name" value="Aldolase"/>
    <property type="match status" value="1"/>
</dbReference>
<dbReference type="PROSITE" id="PS00665">
    <property type="entry name" value="DHDPS_1"/>
    <property type="match status" value="1"/>
</dbReference>
<dbReference type="PROSITE" id="PS00666">
    <property type="entry name" value="DHDPS_2"/>
    <property type="match status" value="1"/>
</dbReference>
<comment type="function">
    <text evidence="1">Catalyzes the condensation of (S)-aspartate-beta-semialdehyde [(S)-ASA] and pyruvate to 4-hydroxy-tetrahydrodipicolinate (HTPA).</text>
</comment>
<comment type="catalytic activity">
    <reaction evidence="1">
        <text>L-aspartate 4-semialdehyde + pyruvate = (2S,4S)-4-hydroxy-2,3,4,5-tetrahydrodipicolinate + H2O + H(+)</text>
        <dbReference type="Rhea" id="RHEA:34171"/>
        <dbReference type="ChEBI" id="CHEBI:15361"/>
        <dbReference type="ChEBI" id="CHEBI:15377"/>
        <dbReference type="ChEBI" id="CHEBI:15378"/>
        <dbReference type="ChEBI" id="CHEBI:67139"/>
        <dbReference type="ChEBI" id="CHEBI:537519"/>
        <dbReference type="EC" id="4.3.3.7"/>
    </reaction>
</comment>
<comment type="pathway">
    <text evidence="1">Amino-acid biosynthesis; L-lysine biosynthesis via DAP pathway; (S)-tetrahydrodipicolinate from L-aspartate: step 3/4.</text>
</comment>
<comment type="subunit">
    <text evidence="1">Homotetramer; dimer of dimers.</text>
</comment>
<comment type="subcellular location">
    <subcellularLocation>
        <location evidence="1">Cytoplasm</location>
    </subcellularLocation>
</comment>
<comment type="similarity">
    <text evidence="1">Belongs to the DapA family.</text>
</comment>
<comment type="caution">
    <text evidence="2">Was originally thought to be a dihydrodipicolinate synthase (DHDPS), catalyzing the condensation of (S)-aspartate-beta-semialdehyde [(S)-ASA] and pyruvate to dihydrodipicolinate (DHDP). However, it was shown in E.coli that the product of the enzymatic reaction is not dihydrodipicolinate but in fact (4S)-4-hydroxy-2,3,4,5-tetrahydro-(2S)-dipicolinic acid (HTPA), and that the consecutive dehydration reaction leading to DHDP is not spontaneous but catalyzed by DapB.</text>
</comment>
<accession>A3D5N2</accession>
<gene>
    <name evidence="1" type="primary">dapA</name>
    <name type="ordered locus">Sbal_2552</name>
</gene>
<protein>
    <recommendedName>
        <fullName evidence="1">4-hydroxy-tetrahydrodipicolinate synthase</fullName>
        <shortName evidence="1">HTPA synthase</shortName>
        <ecNumber evidence="1">4.3.3.7</ecNumber>
    </recommendedName>
</protein>